<protein>
    <recommendedName>
        <fullName>Probable tRNA(His) guanylyltransferase</fullName>
        <ecNumber evidence="2">2.7.7.79</ecNumber>
    </recommendedName>
    <alternativeName>
        <fullName>tRNA-histidine guanylyltransferase</fullName>
    </alternativeName>
</protein>
<reference key="1">
    <citation type="journal article" date="2000" name="Science">
        <title>The genome sequence of Drosophila melanogaster.</title>
        <authorList>
            <person name="Adams M.D."/>
            <person name="Celniker S.E."/>
            <person name="Holt R.A."/>
            <person name="Evans C.A."/>
            <person name="Gocayne J.D."/>
            <person name="Amanatides P.G."/>
            <person name="Scherer S.E."/>
            <person name="Li P.W."/>
            <person name="Hoskins R.A."/>
            <person name="Galle R.F."/>
            <person name="George R.A."/>
            <person name="Lewis S.E."/>
            <person name="Richards S."/>
            <person name="Ashburner M."/>
            <person name="Henderson S.N."/>
            <person name="Sutton G.G."/>
            <person name="Wortman J.R."/>
            <person name="Yandell M.D."/>
            <person name="Zhang Q."/>
            <person name="Chen L.X."/>
            <person name="Brandon R.C."/>
            <person name="Rogers Y.-H.C."/>
            <person name="Blazej R.G."/>
            <person name="Champe M."/>
            <person name="Pfeiffer B.D."/>
            <person name="Wan K.H."/>
            <person name="Doyle C."/>
            <person name="Baxter E.G."/>
            <person name="Helt G."/>
            <person name="Nelson C.R."/>
            <person name="Miklos G.L.G."/>
            <person name="Abril J.F."/>
            <person name="Agbayani A."/>
            <person name="An H.-J."/>
            <person name="Andrews-Pfannkoch C."/>
            <person name="Baldwin D."/>
            <person name="Ballew R.M."/>
            <person name="Basu A."/>
            <person name="Baxendale J."/>
            <person name="Bayraktaroglu L."/>
            <person name="Beasley E.M."/>
            <person name="Beeson K.Y."/>
            <person name="Benos P.V."/>
            <person name="Berman B.P."/>
            <person name="Bhandari D."/>
            <person name="Bolshakov S."/>
            <person name="Borkova D."/>
            <person name="Botchan M.R."/>
            <person name="Bouck J."/>
            <person name="Brokstein P."/>
            <person name="Brottier P."/>
            <person name="Burtis K.C."/>
            <person name="Busam D.A."/>
            <person name="Butler H."/>
            <person name="Cadieu E."/>
            <person name="Center A."/>
            <person name="Chandra I."/>
            <person name="Cherry J.M."/>
            <person name="Cawley S."/>
            <person name="Dahlke C."/>
            <person name="Davenport L.B."/>
            <person name="Davies P."/>
            <person name="de Pablos B."/>
            <person name="Delcher A."/>
            <person name="Deng Z."/>
            <person name="Mays A.D."/>
            <person name="Dew I."/>
            <person name="Dietz S.M."/>
            <person name="Dodson K."/>
            <person name="Doup L.E."/>
            <person name="Downes M."/>
            <person name="Dugan-Rocha S."/>
            <person name="Dunkov B.C."/>
            <person name="Dunn P."/>
            <person name="Durbin K.J."/>
            <person name="Evangelista C.C."/>
            <person name="Ferraz C."/>
            <person name="Ferriera S."/>
            <person name="Fleischmann W."/>
            <person name="Fosler C."/>
            <person name="Gabrielian A.E."/>
            <person name="Garg N.S."/>
            <person name="Gelbart W.M."/>
            <person name="Glasser K."/>
            <person name="Glodek A."/>
            <person name="Gong F."/>
            <person name="Gorrell J.H."/>
            <person name="Gu Z."/>
            <person name="Guan P."/>
            <person name="Harris M."/>
            <person name="Harris N.L."/>
            <person name="Harvey D.A."/>
            <person name="Heiman T.J."/>
            <person name="Hernandez J.R."/>
            <person name="Houck J."/>
            <person name="Hostin D."/>
            <person name="Houston K.A."/>
            <person name="Howland T.J."/>
            <person name="Wei M.-H."/>
            <person name="Ibegwam C."/>
            <person name="Jalali M."/>
            <person name="Kalush F."/>
            <person name="Karpen G.H."/>
            <person name="Ke Z."/>
            <person name="Kennison J.A."/>
            <person name="Ketchum K.A."/>
            <person name="Kimmel B.E."/>
            <person name="Kodira C.D."/>
            <person name="Kraft C.L."/>
            <person name="Kravitz S."/>
            <person name="Kulp D."/>
            <person name="Lai Z."/>
            <person name="Lasko P."/>
            <person name="Lei Y."/>
            <person name="Levitsky A.A."/>
            <person name="Li J.H."/>
            <person name="Li Z."/>
            <person name="Liang Y."/>
            <person name="Lin X."/>
            <person name="Liu X."/>
            <person name="Mattei B."/>
            <person name="McIntosh T.C."/>
            <person name="McLeod M.P."/>
            <person name="McPherson D."/>
            <person name="Merkulov G."/>
            <person name="Milshina N.V."/>
            <person name="Mobarry C."/>
            <person name="Morris J."/>
            <person name="Moshrefi A."/>
            <person name="Mount S.M."/>
            <person name="Moy M."/>
            <person name="Murphy B."/>
            <person name="Murphy L."/>
            <person name="Muzny D.M."/>
            <person name="Nelson D.L."/>
            <person name="Nelson D.R."/>
            <person name="Nelson K.A."/>
            <person name="Nixon K."/>
            <person name="Nusskern D.R."/>
            <person name="Pacleb J.M."/>
            <person name="Palazzolo M."/>
            <person name="Pittman G.S."/>
            <person name="Pan S."/>
            <person name="Pollard J."/>
            <person name="Puri V."/>
            <person name="Reese M.G."/>
            <person name="Reinert K."/>
            <person name="Remington K."/>
            <person name="Saunders R.D.C."/>
            <person name="Scheeler F."/>
            <person name="Shen H."/>
            <person name="Shue B.C."/>
            <person name="Siden-Kiamos I."/>
            <person name="Simpson M."/>
            <person name="Skupski M.P."/>
            <person name="Smith T.J."/>
            <person name="Spier E."/>
            <person name="Spradling A.C."/>
            <person name="Stapleton M."/>
            <person name="Strong R."/>
            <person name="Sun E."/>
            <person name="Svirskas R."/>
            <person name="Tector C."/>
            <person name="Turner R."/>
            <person name="Venter E."/>
            <person name="Wang A.H."/>
            <person name="Wang X."/>
            <person name="Wang Z.-Y."/>
            <person name="Wassarman D.A."/>
            <person name="Weinstock G.M."/>
            <person name="Weissenbach J."/>
            <person name="Williams S.M."/>
            <person name="Woodage T."/>
            <person name="Worley K.C."/>
            <person name="Wu D."/>
            <person name="Yang S."/>
            <person name="Yao Q.A."/>
            <person name="Ye J."/>
            <person name="Yeh R.-F."/>
            <person name="Zaveri J.S."/>
            <person name="Zhan M."/>
            <person name="Zhang G."/>
            <person name="Zhao Q."/>
            <person name="Zheng L."/>
            <person name="Zheng X.H."/>
            <person name="Zhong F.N."/>
            <person name="Zhong W."/>
            <person name="Zhou X."/>
            <person name="Zhu S.C."/>
            <person name="Zhu X."/>
            <person name="Smith H.O."/>
            <person name="Gibbs R.A."/>
            <person name="Myers E.W."/>
            <person name="Rubin G.M."/>
            <person name="Venter J.C."/>
        </authorList>
    </citation>
    <scope>NUCLEOTIDE SEQUENCE [LARGE SCALE GENOMIC DNA]</scope>
    <source>
        <strain>Berkeley</strain>
    </source>
</reference>
<reference key="2">
    <citation type="journal article" date="2002" name="Genome Biol.">
        <title>Annotation of the Drosophila melanogaster euchromatic genome: a systematic review.</title>
        <authorList>
            <person name="Misra S."/>
            <person name="Crosby M.A."/>
            <person name="Mungall C.J."/>
            <person name="Matthews B.B."/>
            <person name="Campbell K.S."/>
            <person name="Hradecky P."/>
            <person name="Huang Y."/>
            <person name="Kaminker J.S."/>
            <person name="Millburn G.H."/>
            <person name="Prochnik S.E."/>
            <person name="Smith C.D."/>
            <person name="Tupy J.L."/>
            <person name="Whitfield E.J."/>
            <person name="Bayraktaroglu L."/>
            <person name="Berman B.P."/>
            <person name="Bettencourt B.R."/>
            <person name="Celniker S.E."/>
            <person name="de Grey A.D.N.J."/>
            <person name="Drysdale R.A."/>
            <person name="Harris N.L."/>
            <person name="Richter J."/>
            <person name="Russo S."/>
            <person name="Schroeder A.J."/>
            <person name="Shu S.Q."/>
            <person name="Stapleton M."/>
            <person name="Yamada C."/>
            <person name="Ashburner M."/>
            <person name="Gelbart W.M."/>
            <person name="Rubin G.M."/>
            <person name="Lewis S.E."/>
        </authorList>
    </citation>
    <scope>GENOME REANNOTATION</scope>
    <source>
        <strain>Berkeley</strain>
    </source>
</reference>
<reference key="3">
    <citation type="submission" date="2005-05" db="EMBL/GenBank/DDBJ databases">
        <authorList>
            <person name="Stapleton M."/>
            <person name="Carlson J.W."/>
            <person name="Chavez C."/>
            <person name="Frise E."/>
            <person name="George R.A."/>
            <person name="Pacleb J.M."/>
            <person name="Park S."/>
            <person name="Wan K.H."/>
            <person name="Yu C."/>
            <person name="Celniker S.E."/>
        </authorList>
    </citation>
    <scope>NUCLEOTIDE SEQUENCE [LARGE SCALE MRNA]</scope>
    <source>
        <strain>Berkeley</strain>
    </source>
</reference>
<sequence>MACSRFEYVKSFEQDDSILPNVWIVIRIDGKKFHKFSKTHDFEKPNDENALNVMNAAATAVMQEFRDIVLAYGQSDEYSFVFRKETAAFKRRSAKLLTYVTSLFSSSYVMQWSKWMNLPLAYAPCFDGRVVLYPSEQNLKDYLSWRQADVHVNNLYNTAFWKLVLEKGLTNQQAEAKLRGTFSADKNELLFQEFGINYNNLPAMYRKGTILLRKRVILGEKSRQAVVPLHEDLISSQFWKEHTEILGKYVPGTYDAPQTFPRLVEMQINGKDDNEAEEPQNLAGTS</sequence>
<keyword id="KW-0342">GTP-binding</keyword>
<keyword id="KW-0460">Magnesium</keyword>
<keyword id="KW-0479">Metal-binding</keyword>
<keyword id="KW-0547">Nucleotide-binding</keyword>
<keyword id="KW-0548">Nucleotidyltransferase</keyword>
<keyword id="KW-1185">Reference proteome</keyword>
<keyword id="KW-0808">Transferase</keyword>
<keyword id="KW-0819">tRNA processing</keyword>
<name>THG1_DROME</name>
<dbReference type="EC" id="2.7.7.79" evidence="2"/>
<dbReference type="EMBL" id="AE014134">
    <property type="protein sequence ID" value="AAF53429.1"/>
    <property type="molecule type" value="Genomic_DNA"/>
</dbReference>
<dbReference type="EMBL" id="AE014134">
    <property type="protein sequence ID" value="ADV37065.1"/>
    <property type="molecule type" value="Genomic_DNA"/>
</dbReference>
<dbReference type="EMBL" id="BT023310">
    <property type="protein sequence ID" value="AAY55726.1"/>
    <property type="molecule type" value="mRNA"/>
</dbReference>
<dbReference type="RefSeq" id="NP_001188815.1">
    <property type="nucleotide sequence ID" value="NM_001201886.1"/>
</dbReference>
<dbReference type="RefSeq" id="NP_609737.1">
    <property type="nucleotide sequence ID" value="NM_135893.2"/>
</dbReference>
<dbReference type="SMR" id="Q9V3N8"/>
<dbReference type="BioGRID" id="60895">
    <property type="interactions" value="2"/>
</dbReference>
<dbReference type="FunCoup" id="Q9V3N8">
    <property type="interactions" value="1545"/>
</dbReference>
<dbReference type="IntAct" id="Q9V3N8">
    <property type="interactions" value="4"/>
</dbReference>
<dbReference type="STRING" id="7227.FBpp0080286"/>
<dbReference type="PaxDb" id="7227-FBpp0292594"/>
<dbReference type="DNASU" id="34876"/>
<dbReference type="EnsemblMetazoa" id="FBtr0080727">
    <property type="protein sequence ID" value="FBpp0080286"/>
    <property type="gene ID" value="FBgn0283659"/>
</dbReference>
<dbReference type="EnsemblMetazoa" id="FBtr0303561">
    <property type="protein sequence ID" value="FBpp0292594"/>
    <property type="gene ID" value="FBgn0283659"/>
</dbReference>
<dbReference type="GeneID" id="34876"/>
<dbReference type="KEGG" id="dme:Dmel_CG4103"/>
<dbReference type="UCSC" id="CG4103-RA">
    <property type="organism name" value="d. melanogaster"/>
</dbReference>
<dbReference type="AGR" id="FB:FBgn0283659"/>
<dbReference type="CTD" id="34876"/>
<dbReference type="FlyBase" id="FBgn0283659">
    <property type="gene designation" value="Thg"/>
</dbReference>
<dbReference type="VEuPathDB" id="VectorBase:FBgn0283659"/>
<dbReference type="eggNOG" id="KOG2721">
    <property type="taxonomic scope" value="Eukaryota"/>
</dbReference>
<dbReference type="GeneTree" id="ENSGT00390000011705"/>
<dbReference type="HOGENOM" id="CLU_044271_0_0_1"/>
<dbReference type="InParanoid" id="Q9V3N8"/>
<dbReference type="OMA" id="WKQHTEI"/>
<dbReference type="OrthoDB" id="62560at2759"/>
<dbReference type="PhylomeDB" id="Q9V3N8"/>
<dbReference type="GenomeRNAi" id="34876"/>
<dbReference type="PRO" id="PR:Q9V3N8"/>
<dbReference type="Proteomes" id="UP000000803">
    <property type="component" value="Chromosome 2L"/>
</dbReference>
<dbReference type="Bgee" id="FBgn0283659">
    <property type="expression patterns" value="Expressed in adult middle midgut class II enteroendocrine cell in adult midgut (Drosophila) and 23 other cell types or tissues"/>
</dbReference>
<dbReference type="GO" id="GO:0005739">
    <property type="term" value="C:mitochondrion"/>
    <property type="evidence" value="ECO:0000250"/>
    <property type="project" value="FlyBase"/>
</dbReference>
<dbReference type="GO" id="GO:0005525">
    <property type="term" value="F:GTP binding"/>
    <property type="evidence" value="ECO:0007669"/>
    <property type="project" value="UniProtKB-KW"/>
</dbReference>
<dbReference type="GO" id="GO:0000287">
    <property type="term" value="F:magnesium ion binding"/>
    <property type="evidence" value="ECO:0007669"/>
    <property type="project" value="InterPro"/>
</dbReference>
<dbReference type="GO" id="GO:0008193">
    <property type="term" value="F:tRNA guanylyltransferase activity"/>
    <property type="evidence" value="ECO:0000250"/>
    <property type="project" value="UniProtKB"/>
</dbReference>
<dbReference type="GO" id="GO:0006400">
    <property type="term" value="P:tRNA modification"/>
    <property type="evidence" value="ECO:0000250"/>
    <property type="project" value="UniProtKB"/>
</dbReference>
<dbReference type="GO" id="GO:0008033">
    <property type="term" value="P:tRNA processing"/>
    <property type="evidence" value="ECO:0000250"/>
    <property type="project" value="UniProtKB"/>
</dbReference>
<dbReference type="FunFam" id="3.30.70.3000:FF:000005">
    <property type="entry name" value="tRNA(His) guanylyltransferase"/>
    <property type="match status" value="1"/>
</dbReference>
<dbReference type="Gene3D" id="3.30.70.3000">
    <property type="match status" value="1"/>
</dbReference>
<dbReference type="InterPro" id="IPR025845">
    <property type="entry name" value="Thg1_C_dom"/>
</dbReference>
<dbReference type="InterPro" id="IPR024956">
    <property type="entry name" value="tRNAHis_GuaTrfase_cat"/>
</dbReference>
<dbReference type="InterPro" id="IPR007537">
    <property type="entry name" value="tRNAHis_GuaTrfase_Thg1"/>
</dbReference>
<dbReference type="InterPro" id="IPR038469">
    <property type="entry name" value="tRNAHis_GuaTrfase_Thg1_sf"/>
</dbReference>
<dbReference type="PANTHER" id="PTHR12729">
    <property type="entry name" value="TRNA(HIS) GUANYLYLTRANSFERASE-RELATED"/>
    <property type="match status" value="1"/>
</dbReference>
<dbReference type="PANTHER" id="PTHR12729:SF6">
    <property type="entry name" value="TRNA(HIS) GUANYLYLTRANSFERASE-RELATED"/>
    <property type="match status" value="1"/>
</dbReference>
<dbReference type="Pfam" id="PF04446">
    <property type="entry name" value="Thg1"/>
    <property type="match status" value="1"/>
</dbReference>
<dbReference type="Pfam" id="PF14413">
    <property type="entry name" value="Thg1C"/>
    <property type="match status" value="1"/>
</dbReference>
<dbReference type="PIRSF" id="PIRSF028980">
    <property type="entry name" value="tRNAHis_guanylyltransferase"/>
    <property type="match status" value="1"/>
</dbReference>
<gene>
    <name evidence="4" type="primary">Thg</name>
    <name evidence="4" type="synonym">l(2)35Bc</name>
    <name evidence="4" type="ORF">CG4103</name>
</gene>
<evidence type="ECO:0000250" key="1"/>
<evidence type="ECO:0000250" key="2">
    <source>
        <dbReference type="UniProtKB" id="Q9NWX6"/>
    </source>
</evidence>
<evidence type="ECO:0000305" key="3"/>
<evidence type="ECO:0000312" key="4">
    <source>
        <dbReference type="FlyBase" id="FBgn0283659"/>
    </source>
</evidence>
<evidence type="ECO:0000312" key="5">
    <source>
        <dbReference type="Proteomes" id="UP000000803"/>
    </source>
</evidence>
<accession>Q9V3N8</accession>
<accession>M9MSI6</accession>
<organism evidence="5">
    <name type="scientific">Drosophila melanogaster</name>
    <name type="common">Fruit fly</name>
    <dbReference type="NCBI Taxonomy" id="7227"/>
    <lineage>
        <taxon>Eukaryota</taxon>
        <taxon>Metazoa</taxon>
        <taxon>Ecdysozoa</taxon>
        <taxon>Arthropoda</taxon>
        <taxon>Hexapoda</taxon>
        <taxon>Insecta</taxon>
        <taxon>Pterygota</taxon>
        <taxon>Neoptera</taxon>
        <taxon>Endopterygota</taxon>
        <taxon>Diptera</taxon>
        <taxon>Brachycera</taxon>
        <taxon>Muscomorpha</taxon>
        <taxon>Ephydroidea</taxon>
        <taxon>Drosophilidae</taxon>
        <taxon>Drosophila</taxon>
        <taxon>Sophophora</taxon>
    </lineage>
</organism>
<feature type="chain" id="PRO_0000284987" description="Probable tRNA(His) guanylyltransferase">
    <location>
        <begin position="1"/>
        <end position="286"/>
    </location>
</feature>
<feature type="binding site" evidence="1">
    <location>
        <begin position="29"/>
        <end position="34"/>
    </location>
    <ligand>
        <name>GTP</name>
        <dbReference type="ChEBI" id="CHEBI:37565"/>
    </ligand>
</feature>
<feature type="binding site" evidence="1">
    <location>
        <position position="29"/>
    </location>
    <ligand>
        <name>Mg(2+)</name>
        <dbReference type="ChEBI" id="CHEBI:18420"/>
        <label>1</label>
        <note>catalytic</note>
    </ligand>
</feature>
<feature type="binding site" evidence="1">
    <location>
        <position position="29"/>
    </location>
    <ligand>
        <name>Mg(2+)</name>
        <dbReference type="ChEBI" id="CHEBI:18420"/>
        <label>2</label>
        <note>catalytic</note>
    </ligand>
</feature>
<feature type="binding site" evidence="1">
    <location>
        <position position="30"/>
    </location>
    <ligand>
        <name>Mg(2+)</name>
        <dbReference type="ChEBI" id="CHEBI:18420"/>
        <label>1</label>
        <note>catalytic</note>
    </ligand>
</feature>
<feature type="binding site" evidence="1">
    <location>
        <begin position="75"/>
        <end position="76"/>
    </location>
    <ligand>
        <name>GTP</name>
        <dbReference type="ChEBI" id="CHEBI:37565"/>
    </ligand>
</feature>
<feature type="binding site" evidence="1">
    <location>
        <position position="76"/>
    </location>
    <ligand>
        <name>Mg(2+)</name>
        <dbReference type="ChEBI" id="CHEBI:18420"/>
        <label>1</label>
        <note>catalytic</note>
    </ligand>
</feature>
<feature type="binding site" evidence="1">
    <location>
        <position position="76"/>
    </location>
    <ligand>
        <name>Mg(2+)</name>
        <dbReference type="ChEBI" id="CHEBI:18420"/>
        <label>2</label>
        <note>catalytic</note>
    </ligand>
</feature>
<comment type="function">
    <text evidence="2">Adds a GMP to the 5'-end of tRNA(His) after transcription and RNase P cleavage.</text>
</comment>
<comment type="catalytic activity">
    <reaction evidence="2">
        <text>a 5'-end ribonucleotide-tRNA(His) + GTP + ATP + H2O = a 5'-end phospho-guanosine-ribonucleotide-tRNA(His) + AMP + 2 diphosphate + H(+)</text>
        <dbReference type="Rhea" id="RHEA:54564"/>
        <dbReference type="Rhea" id="RHEA-COMP:14193"/>
        <dbReference type="Rhea" id="RHEA-COMP:14917"/>
        <dbReference type="ChEBI" id="CHEBI:15377"/>
        <dbReference type="ChEBI" id="CHEBI:15378"/>
        <dbReference type="ChEBI" id="CHEBI:30616"/>
        <dbReference type="ChEBI" id="CHEBI:33019"/>
        <dbReference type="ChEBI" id="CHEBI:37565"/>
        <dbReference type="ChEBI" id="CHEBI:138282"/>
        <dbReference type="ChEBI" id="CHEBI:141847"/>
        <dbReference type="ChEBI" id="CHEBI:456215"/>
        <dbReference type="EC" id="2.7.7.79"/>
    </reaction>
</comment>
<comment type="cofactor">
    <cofactor evidence="1">
        <name>Mg(2+)</name>
        <dbReference type="ChEBI" id="CHEBI:18420"/>
    </cofactor>
    <text evidence="1">Binds 2 magnesium ions per subunit.</text>
</comment>
<comment type="interaction">
    <interactant intactId="EBI-131989">
        <id>Q9V3N8</id>
    </interactant>
    <interactant intactId="EBI-174177">
        <id>P43332</id>
        <label>snf</label>
    </interactant>
    <organismsDiffer>false</organismsDiffer>
    <experiments>3</experiments>
</comment>
<comment type="similarity">
    <text evidence="3">Belongs to the tRNA(His) guanylyltransferase family.</text>
</comment>
<proteinExistence type="evidence at protein level"/>